<protein>
    <recommendedName>
        <fullName evidence="1">Cell division topological specificity factor</fullName>
    </recommendedName>
</protein>
<keyword id="KW-0131">Cell cycle</keyword>
<keyword id="KW-0132">Cell division</keyword>
<keyword id="KW-1185">Reference proteome</keyword>
<accession>A8FWA5</accession>
<sequence length="86" mass="10023">MSLLDYFKSKKKPNTAVTAKERLQIIVAHQRGERDAPDYFPQMKQEIIEVIKKYVHIDPDQVTVQLDQNDDKLSVLELNVTLPEEK</sequence>
<organism>
    <name type="scientific">Shewanella sediminis (strain HAW-EB3)</name>
    <dbReference type="NCBI Taxonomy" id="425104"/>
    <lineage>
        <taxon>Bacteria</taxon>
        <taxon>Pseudomonadati</taxon>
        <taxon>Pseudomonadota</taxon>
        <taxon>Gammaproteobacteria</taxon>
        <taxon>Alteromonadales</taxon>
        <taxon>Shewanellaceae</taxon>
        <taxon>Shewanella</taxon>
    </lineage>
</organism>
<proteinExistence type="inferred from homology"/>
<feature type="chain" id="PRO_1000078649" description="Cell division topological specificity factor">
    <location>
        <begin position="1"/>
        <end position="86"/>
    </location>
</feature>
<dbReference type="EMBL" id="CP000821">
    <property type="protein sequence ID" value="ABV37128.1"/>
    <property type="molecule type" value="Genomic_DNA"/>
</dbReference>
<dbReference type="RefSeq" id="WP_012142861.1">
    <property type="nucleotide sequence ID" value="NC_009831.1"/>
</dbReference>
<dbReference type="SMR" id="A8FWA5"/>
<dbReference type="STRING" id="425104.Ssed_2521"/>
<dbReference type="KEGG" id="sse:Ssed_2521"/>
<dbReference type="eggNOG" id="COG0851">
    <property type="taxonomic scope" value="Bacteria"/>
</dbReference>
<dbReference type="HOGENOM" id="CLU_137929_2_2_6"/>
<dbReference type="OrthoDB" id="9802655at2"/>
<dbReference type="Proteomes" id="UP000002015">
    <property type="component" value="Chromosome"/>
</dbReference>
<dbReference type="GO" id="GO:0051301">
    <property type="term" value="P:cell division"/>
    <property type="evidence" value="ECO:0007669"/>
    <property type="project" value="UniProtKB-KW"/>
</dbReference>
<dbReference type="GO" id="GO:0032955">
    <property type="term" value="P:regulation of division septum assembly"/>
    <property type="evidence" value="ECO:0007669"/>
    <property type="project" value="InterPro"/>
</dbReference>
<dbReference type="FunFam" id="3.30.1070.10:FF:000001">
    <property type="entry name" value="Cell division topological specificity factor"/>
    <property type="match status" value="1"/>
</dbReference>
<dbReference type="Gene3D" id="3.30.1070.10">
    <property type="entry name" value="Cell division topological specificity factor MinE"/>
    <property type="match status" value="1"/>
</dbReference>
<dbReference type="HAMAP" id="MF_00262">
    <property type="entry name" value="MinE"/>
    <property type="match status" value="1"/>
</dbReference>
<dbReference type="InterPro" id="IPR005527">
    <property type="entry name" value="MinE"/>
</dbReference>
<dbReference type="InterPro" id="IPR036707">
    <property type="entry name" value="MinE_sf"/>
</dbReference>
<dbReference type="NCBIfam" id="TIGR01215">
    <property type="entry name" value="minE"/>
    <property type="match status" value="1"/>
</dbReference>
<dbReference type="NCBIfam" id="NF001422">
    <property type="entry name" value="PRK00296.1"/>
    <property type="match status" value="1"/>
</dbReference>
<dbReference type="Pfam" id="PF03776">
    <property type="entry name" value="MinE"/>
    <property type="match status" value="1"/>
</dbReference>
<dbReference type="SUPFAM" id="SSF55229">
    <property type="entry name" value="Cell division protein MinE topological specificity domain"/>
    <property type="match status" value="1"/>
</dbReference>
<gene>
    <name evidence="1" type="primary">minE</name>
    <name type="ordered locus">Ssed_2521</name>
</gene>
<evidence type="ECO:0000255" key="1">
    <source>
        <dbReference type="HAMAP-Rule" id="MF_00262"/>
    </source>
</evidence>
<comment type="function">
    <text evidence="1">Prevents the cell division inhibition by proteins MinC and MinD at internal division sites while permitting inhibition at polar sites. This ensures cell division at the proper site by restricting the formation of a division septum at the midpoint of the long axis of the cell.</text>
</comment>
<comment type="similarity">
    <text evidence="1">Belongs to the MinE family.</text>
</comment>
<name>MINE_SHESH</name>
<reference key="1">
    <citation type="submission" date="2007-08" db="EMBL/GenBank/DDBJ databases">
        <title>Complete sequence of Shewanella sediminis HAW-EB3.</title>
        <authorList>
            <consortium name="US DOE Joint Genome Institute"/>
            <person name="Copeland A."/>
            <person name="Lucas S."/>
            <person name="Lapidus A."/>
            <person name="Barry K."/>
            <person name="Glavina del Rio T."/>
            <person name="Dalin E."/>
            <person name="Tice H."/>
            <person name="Pitluck S."/>
            <person name="Chertkov O."/>
            <person name="Brettin T."/>
            <person name="Bruce D."/>
            <person name="Detter J.C."/>
            <person name="Han C."/>
            <person name="Schmutz J."/>
            <person name="Larimer F."/>
            <person name="Land M."/>
            <person name="Hauser L."/>
            <person name="Kyrpides N."/>
            <person name="Kim E."/>
            <person name="Zhao J.-S."/>
            <person name="Richardson P."/>
        </authorList>
    </citation>
    <scope>NUCLEOTIDE SEQUENCE [LARGE SCALE GENOMIC DNA]</scope>
    <source>
        <strain>HAW-EB3</strain>
    </source>
</reference>